<feature type="chain" id="PRO_1000142779" description="Large ribosomal subunit protein uL15">
    <location>
        <begin position="1"/>
        <end position="145"/>
    </location>
</feature>
<feature type="region of interest" description="Disordered" evidence="2">
    <location>
        <begin position="1"/>
        <end position="52"/>
    </location>
</feature>
<feature type="compositionally biased region" description="Gly residues" evidence="2">
    <location>
        <begin position="19"/>
        <end position="33"/>
    </location>
</feature>
<evidence type="ECO:0000255" key="1">
    <source>
        <dbReference type="HAMAP-Rule" id="MF_01341"/>
    </source>
</evidence>
<evidence type="ECO:0000256" key="2">
    <source>
        <dbReference type="SAM" id="MobiDB-lite"/>
    </source>
</evidence>
<evidence type="ECO:0000305" key="3"/>
<name>RL15_BORBZ</name>
<gene>
    <name evidence="1" type="primary">rplO</name>
    <name type="ordered locus">BbuZS7_0508</name>
</gene>
<dbReference type="EMBL" id="CP001205">
    <property type="protein sequence ID" value="ACK74765.1"/>
    <property type="molecule type" value="Genomic_DNA"/>
</dbReference>
<dbReference type="RefSeq" id="WP_002656004.1">
    <property type="nucleotide sequence ID" value="NC_011728.1"/>
</dbReference>
<dbReference type="SMR" id="B7J262"/>
<dbReference type="GeneID" id="56567932"/>
<dbReference type="KEGG" id="bbz:BbuZS7_0508"/>
<dbReference type="HOGENOM" id="CLU_055188_4_2_12"/>
<dbReference type="Proteomes" id="UP000006901">
    <property type="component" value="Chromosome"/>
</dbReference>
<dbReference type="GO" id="GO:0022625">
    <property type="term" value="C:cytosolic large ribosomal subunit"/>
    <property type="evidence" value="ECO:0007669"/>
    <property type="project" value="TreeGrafter"/>
</dbReference>
<dbReference type="GO" id="GO:0019843">
    <property type="term" value="F:rRNA binding"/>
    <property type="evidence" value="ECO:0007669"/>
    <property type="project" value="UniProtKB-UniRule"/>
</dbReference>
<dbReference type="GO" id="GO:0003735">
    <property type="term" value="F:structural constituent of ribosome"/>
    <property type="evidence" value="ECO:0007669"/>
    <property type="project" value="InterPro"/>
</dbReference>
<dbReference type="GO" id="GO:0006412">
    <property type="term" value="P:translation"/>
    <property type="evidence" value="ECO:0007669"/>
    <property type="project" value="UniProtKB-UniRule"/>
</dbReference>
<dbReference type="Gene3D" id="3.100.10.10">
    <property type="match status" value="1"/>
</dbReference>
<dbReference type="HAMAP" id="MF_01341">
    <property type="entry name" value="Ribosomal_uL15"/>
    <property type="match status" value="1"/>
</dbReference>
<dbReference type="InterPro" id="IPR030878">
    <property type="entry name" value="Ribosomal_uL15"/>
</dbReference>
<dbReference type="InterPro" id="IPR021131">
    <property type="entry name" value="Ribosomal_uL15/eL18"/>
</dbReference>
<dbReference type="InterPro" id="IPR036227">
    <property type="entry name" value="Ribosomal_uL15/eL18_sf"/>
</dbReference>
<dbReference type="InterPro" id="IPR005749">
    <property type="entry name" value="Ribosomal_uL15_bac-type"/>
</dbReference>
<dbReference type="InterPro" id="IPR001196">
    <property type="entry name" value="Ribosomal_uL15_CS"/>
</dbReference>
<dbReference type="NCBIfam" id="TIGR01071">
    <property type="entry name" value="rplO_bact"/>
    <property type="match status" value="1"/>
</dbReference>
<dbReference type="PANTHER" id="PTHR12934">
    <property type="entry name" value="50S RIBOSOMAL PROTEIN L15"/>
    <property type="match status" value="1"/>
</dbReference>
<dbReference type="PANTHER" id="PTHR12934:SF11">
    <property type="entry name" value="LARGE RIBOSOMAL SUBUNIT PROTEIN UL15M"/>
    <property type="match status" value="1"/>
</dbReference>
<dbReference type="Pfam" id="PF00828">
    <property type="entry name" value="Ribosomal_L27A"/>
    <property type="match status" value="1"/>
</dbReference>
<dbReference type="SUPFAM" id="SSF52080">
    <property type="entry name" value="Ribosomal proteins L15p and L18e"/>
    <property type="match status" value="1"/>
</dbReference>
<dbReference type="PROSITE" id="PS00475">
    <property type="entry name" value="RIBOSOMAL_L15"/>
    <property type="match status" value="1"/>
</dbReference>
<proteinExistence type="inferred from homology"/>
<protein>
    <recommendedName>
        <fullName evidence="1">Large ribosomal subunit protein uL15</fullName>
    </recommendedName>
    <alternativeName>
        <fullName evidence="3">50S ribosomal protein L15</fullName>
    </alternativeName>
</protein>
<keyword id="KW-0687">Ribonucleoprotein</keyword>
<keyword id="KW-0689">Ribosomal protein</keyword>
<keyword id="KW-0694">RNA-binding</keyword>
<keyword id="KW-0699">rRNA-binding</keyword>
<sequence length="145" mass="16039">MFNLLKPKGASKRRKIVGRGPGSGLGKTSGRGQKGQKARNTSPRLGFEGGQTPLYRRLPRKGFSNSDYKLEYAIVNLGDIDKKFKDGQVVNYDTLLENKLIKKKNKKIKILSNGKLTKKVSFEVSKISKSAESLVIKIGCTIQLV</sequence>
<comment type="function">
    <text evidence="1">Binds to the 23S rRNA.</text>
</comment>
<comment type="subunit">
    <text evidence="1">Part of the 50S ribosomal subunit.</text>
</comment>
<comment type="similarity">
    <text evidence="1">Belongs to the universal ribosomal protein uL15 family.</text>
</comment>
<reference key="1">
    <citation type="journal article" date="2011" name="J. Bacteriol.">
        <title>Whole-genome sequences of thirteen isolates of Borrelia burgdorferi.</title>
        <authorList>
            <person name="Schutzer S.E."/>
            <person name="Fraser-Liggett C.M."/>
            <person name="Casjens S.R."/>
            <person name="Qiu W.G."/>
            <person name="Dunn J.J."/>
            <person name="Mongodin E.F."/>
            <person name="Luft B.J."/>
        </authorList>
    </citation>
    <scope>NUCLEOTIDE SEQUENCE [LARGE SCALE GENOMIC DNA]</scope>
    <source>
        <strain>ZS7</strain>
    </source>
</reference>
<organism>
    <name type="scientific">Borreliella burgdorferi (strain ZS7)</name>
    <name type="common">Borrelia burgdorferi</name>
    <dbReference type="NCBI Taxonomy" id="445985"/>
    <lineage>
        <taxon>Bacteria</taxon>
        <taxon>Pseudomonadati</taxon>
        <taxon>Spirochaetota</taxon>
        <taxon>Spirochaetia</taxon>
        <taxon>Spirochaetales</taxon>
        <taxon>Borreliaceae</taxon>
        <taxon>Borreliella</taxon>
    </lineage>
</organism>
<accession>B7J262</accession>